<sequence>MAGTTGERPFSDILTSIRYWIIHSITVPSLFIAGWLFVSTGLAYDVFGSPRPNEYFSNGQQEAPIVLDRFGKL</sequence>
<proteinExistence type="inferred from homology"/>
<gene>
    <name evidence="1" type="primary">psbE</name>
</gene>
<keyword id="KW-0150">Chloroplast</keyword>
<keyword id="KW-0249">Electron transport</keyword>
<keyword id="KW-0349">Heme</keyword>
<keyword id="KW-0408">Iron</keyword>
<keyword id="KW-0472">Membrane</keyword>
<keyword id="KW-0479">Metal-binding</keyword>
<keyword id="KW-0602">Photosynthesis</keyword>
<keyword id="KW-0604">Photosystem II</keyword>
<keyword id="KW-0934">Plastid</keyword>
<keyword id="KW-0793">Thylakoid</keyword>
<keyword id="KW-0812">Transmembrane</keyword>
<keyword id="KW-1133">Transmembrane helix</keyword>
<keyword id="KW-0813">Transport</keyword>
<protein>
    <recommendedName>
        <fullName evidence="1">Cytochrome b559 subunit alpha</fullName>
    </recommendedName>
    <alternativeName>
        <fullName evidence="1">PSII reaction center subunit V</fullName>
    </alternativeName>
</protein>
<name>PSBE_BIGNA</name>
<geneLocation type="chloroplast"/>
<reference key="1">
    <citation type="journal article" date="2007" name="Mol. Biol. Evol.">
        <title>The complete chloroplast genome of the chlorarachniophyte Bigelowiella natans: evidence for independent origins of chlorarachniophyte and euglenid secondary endosymbionts.</title>
        <authorList>
            <person name="Rogers M.B."/>
            <person name="Gilson P.R."/>
            <person name="Su V."/>
            <person name="McFadden G.I."/>
            <person name="Keeling P.J."/>
        </authorList>
    </citation>
    <scope>NUCLEOTIDE SEQUENCE [LARGE SCALE GENOMIC DNA]</scope>
</reference>
<organism>
    <name type="scientific">Bigelowiella natans</name>
    <name type="common">Pedinomonas minutissima</name>
    <name type="synonym">Chlorarachnion sp. (strain CCMP621)</name>
    <dbReference type="NCBI Taxonomy" id="227086"/>
    <lineage>
        <taxon>Eukaryota</taxon>
        <taxon>Sar</taxon>
        <taxon>Rhizaria</taxon>
        <taxon>Cercozoa</taxon>
        <taxon>Chlorarachniophyceae</taxon>
        <taxon>Bigelowiella</taxon>
    </lineage>
</organism>
<dbReference type="EMBL" id="DQ851108">
    <property type="protein sequence ID" value="ABG91448.1"/>
    <property type="molecule type" value="Genomic_DNA"/>
</dbReference>
<dbReference type="RefSeq" id="YP_778616.1">
    <property type="nucleotide sequence ID" value="NC_008408.1"/>
</dbReference>
<dbReference type="SMR" id="Q06J11"/>
<dbReference type="GeneID" id="4353033"/>
<dbReference type="GO" id="GO:0009535">
    <property type="term" value="C:chloroplast thylakoid membrane"/>
    <property type="evidence" value="ECO:0007669"/>
    <property type="project" value="UniProtKB-SubCell"/>
</dbReference>
<dbReference type="GO" id="GO:0009539">
    <property type="term" value="C:photosystem II reaction center"/>
    <property type="evidence" value="ECO:0007669"/>
    <property type="project" value="InterPro"/>
</dbReference>
<dbReference type="GO" id="GO:0009055">
    <property type="term" value="F:electron transfer activity"/>
    <property type="evidence" value="ECO:0007669"/>
    <property type="project" value="UniProtKB-UniRule"/>
</dbReference>
<dbReference type="GO" id="GO:0020037">
    <property type="term" value="F:heme binding"/>
    <property type="evidence" value="ECO:0007669"/>
    <property type="project" value="InterPro"/>
</dbReference>
<dbReference type="GO" id="GO:0005506">
    <property type="term" value="F:iron ion binding"/>
    <property type="evidence" value="ECO:0007669"/>
    <property type="project" value="UniProtKB-UniRule"/>
</dbReference>
<dbReference type="GO" id="GO:0009767">
    <property type="term" value="P:photosynthetic electron transport chain"/>
    <property type="evidence" value="ECO:0007669"/>
    <property type="project" value="InterPro"/>
</dbReference>
<dbReference type="Gene3D" id="1.20.5.860">
    <property type="entry name" value="Photosystem II cytochrome b559, alpha subunit"/>
    <property type="match status" value="1"/>
</dbReference>
<dbReference type="HAMAP" id="MF_00642">
    <property type="entry name" value="PSII_PsbE"/>
    <property type="match status" value="1"/>
</dbReference>
<dbReference type="InterPro" id="IPR006217">
    <property type="entry name" value="PSII_cyt_b559_asu"/>
</dbReference>
<dbReference type="InterPro" id="IPR037025">
    <property type="entry name" value="PSII_cyt_b559_asu_sf"/>
</dbReference>
<dbReference type="InterPro" id="IPR006216">
    <property type="entry name" value="PSII_cyt_b559_CS"/>
</dbReference>
<dbReference type="InterPro" id="IPR013081">
    <property type="entry name" value="PSII_cyt_b559_N"/>
</dbReference>
<dbReference type="InterPro" id="IPR013082">
    <property type="entry name" value="PSII_cytb559_asu_lum"/>
</dbReference>
<dbReference type="NCBIfam" id="TIGR01332">
    <property type="entry name" value="cyt_b559_alpha"/>
    <property type="match status" value="1"/>
</dbReference>
<dbReference type="PANTHER" id="PTHR33391">
    <property type="entry name" value="CYTOCHROME B559 SUBUNIT BETA-RELATED"/>
    <property type="match status" value="1"/>
</dbReference>
<dbReference type="PANTHER" id="PTHR33391:SF9">
    <property type="entry name" value="CYTOCHROME B559 SUBUNIT BETA-RELATED"/>
    <property type="match status" value="1"/>
</dbReference>
<dbReference type="Pfam" id="PF00283">
    <property type="entry name" value="Cytochrom_B559"/>
    <property type="match status" value="1"/>
</dbReference>
<dbReference type="Pfam" id="PF00284">
    <property type="entry name" value="Cytochrom_B559a"/>
    <property type="match status" value="1"/>
</dbReference>
<dbReference type="PIRSF" id="PIRSF000036">
    <property type="entry name" value="PsbE"/>
    <property type="match status" value="1"/>
</dbReference>
<dbReference type="SUPFAM" id="SSF161045">
    <property type="entry name" value="Cytochrome b559 subunits"/>
    <property type="match status" value="1"/>
</dbReference>
<dbReference type="PROSITE" id="PS00537">
    <property type="entry name" value="CYTOCHROME_B559"/>
    <property type="match status" value="1"/>
</dbReference>
<feature type="chain" id="PRO_0000310396" description="Cytochrome b559 subunit alpha">
    <location>
        <begin position="1"/>
        <end position="73"/>
    </location>
</feature>
<feature type="transmembrane region" description="Helical" evidence="1">
    <location>
        <begin position="21"/>
        <end position="35"/>
    </location>
</feature>
<feature type="binding site" description="axial binding residue" evidence="1">
    <location>
        <position position="23"/>
    </location>
    <ligand>
        <name>heme</name>
        <dbReference type="ChEBI" id="CHEBI:30413"/>
        <note>ligand shared with beta subunit</note>
    </ligand>
    <ligandPart>
        <name>Fe</name>
        <dbReference type="ChEBI" id="CHEBI:18248"/>
    </ligandPart>
</feature>
<evidence type="ECO:0000255" key="1">
    <source>
        <dbReference type="HAMAP-Rule" id="MF_00642"/>
    </source>
</evidence>
<evidence type="ECO:0000305" key="2"/>
<accession>Q06J11</accession>
<comment type="function">
    <text evidence="1">This b-type cytochrome is tightly associated with the reaction center of photosystem II (PSII). PSII is a light-driven water:plastoquinone oxidoreductase that uses light energy to abstract electrons from H(2)O, generating O(2) and a proton gradient subsequently used for ATP formation. It consists of a core antenna complex that captures photons, and an electron transfer chain that converts photonic excitation into a charge separation.</text>
</comment>
<comment type="cofactor">
    <cofactor evidence="1">
        <name>heme b</name>
        <dbReference type="ChEBI" id="CHEBI:60344"/>
    </cofactor>
    <text evidence="1">With its partner (PsbF) binds heme. PSII binds additional chlorophylls, carotenoids and specific lipids.</text>
</comment>
<comment type="subunit">
    <text evidence="2">Heterodimer of an alpha subunit and a beta subunit. PSII is composed of 1 copy each of membrane proteins PsbA, PsbB, PsbC, PsbD, PsbE, PsbF, PsbH, PsbI, PsbJ, PsbK, PsbL, PsbM, PsbT, PsbY, PsbZ, Psb30/Ycf12, at least 3 peripheral proteins of the oxygen-evolving complex and a large number of cofactors. It forms dimeric complexes.</text>
</comment>
<comment type="subcellular location">
    <subcellularLocation>
        <location evidence="1">Plastid</location>
        <location evidence="1">Chloroplast thylakoid membrane</location>
        <topology evidence="1">Single-pass membrane protein</topology>
    </subcellularLocation>
</comment>
<comment type="similarity">
    <text evidence="1">Belongs to the PsbE/PsbF family.</text>
</comment>